<sequence>MSRRNAAVKRPVLPDPQFNSRLASMMISRLMKHGKKSTAQRILSDAFSLISERTGGDAVELFETAVKNATPLVEVRARRVGGATYQVPMEVRQERGTAMALRWLVTFSRARNGKSMSQKLAGELMDAANETGSSVKKREDTHKMAEANKAFAHYRY</sequence>
<protein>
    <recommendedName>
        <fullName evidence="1">Small ribosomal subunit protein uS7</fullName>
    </recommendedName>
    <alternativeName>
        <fullName evidence="2">30S ribosomal protein S7</fullName>
    </alternativeName>
</protein>
<evidence type="ECO:0000255" key="1">
    <source>
        <dbReference type="HAMAP-Rule" id="MF_00480"/>
    </source>
</evidence>
<evidence type="ECO:0000305" key="2"/>
<reference key="1">
    <citation type="journal article" date="2006" name="Science">
        <title>Genomic islands and the ecology and evolution of Prochlorococcus.</title>
        <authorList>
            <person name="Coleman M.L."/>
            <person name="Sullivan M.B."/>
            <person name="Martiny A.C."/>
            <person name="Steglich C."/>
            <person name="Barry K."/>
            <person name="Delong E.F."/>
            <person name="Chisholm S.W."/>
        </authorList>
    </citation>
    <scope>NUCLEOTIDE SEQUENCE [LARGE SCALE GENOMIC DNA]</scope>
    <source>
        <strain>MIT 9312</strain>
    </source>
</reference>
<gene>
    <name evidence="1" type="primary">rpsG</name>
    <name evidence="1" type="synonym">rps7</name>
    <name type="ordered locus">PMT9312_1602</name>
</gene>
<proteinExistence type="inferred from homology"/>
<dbReference type="EMBL" id="CP000111">
    <property type="protein sequence ID" value="ABB50662.1"/>
    <property type="molecule type" value="Genomic_DNA"/>
</dbReference>
<dbReference type="RefSeq" id="WP_011377144.1">
    <property type="nucleotide sequence ID" value="NC_007577.1"/>
</dbReference>
<dbReference type="SMR" id="Q318N3"/>
<dbReference type="STRING" id="74546.PMT9312_1602"/>
<dbReference type="KEGG" id="pmi:PMT9312_1602"/>
<dbReference type="eggNOG" id="COG0049">
    <property type="taxonomic scope" value="Bacteria"/>
</dbReference>
<dbReference type="HOGENOM" id="CLU_072226_1_1_3"/>
<dbReference type="OrthoDB" id="9807653at2"/>
<dbReference type="Proteomes" id="UP000002715">
    <property type="component" value="Chromosome"/>
</dbReference>
<dbReference type="GO" id="GO:0015935">
    <property type="term" value="C:small ribosomal subunit"/>
    <property type="evidence" value="ECO:0007669"/>
    <property type="project" value="InterPro"/>
</dbReference>
<dbReference type="GO" id="GO:0019843">
    <property type="term" value="F:rRNA binding"/>
    <property type="evidence" value="ECO:0007669"/>
    <property type="project" value="UniProtKB-UniRule"/>
</dbReference>
<dbReference type="GO" id="GO:0003735">
    <property type="term" value="F:structural constituent of ribosome"/>
    <property type="evidence" value="ECO:0007669"/>
    <property type="project" value="InterPro"/>
</dbReference>
<dbReference type="GO" id="GO:0000049">
    <property type="term" value="F:tRNA binding"/>
    <property type="evidence" value="ECO:0007669"/>
    <property type="project" value="UniProtKB-UniRule"/>
</dbReference>
<dbReference type="GO" id="GO:0006412">
    <property type="term" value="P:translation"/>
    <property type="evidence" value="ECO:0007669"/>
    <property type="project" value="UniProtKB-UniRule"/>
</dbReference>
<dbReference type="CDD" id="cd14869">
    <property type="entry name" value="uS7_Bacteria"/>
    <property type="match status" value="1"/>
</dbReference>
<dbReference type="FunFam" id="1.10.455.10:FF:000001">
    <property type="entry name" value="30S ribosomal protein S7"/>
    <property type="match status" value="1"/>
</dbReference>
<dbReference type="Gene3D" id="1.10.455.10">
    <property type="entry name" value="Ribosomal protein S7 domain"/>
    <property type="match status" value="1"/>
</dbReference>
<dbReference type="HAMAP" id="MF_00480_B">
    <property type="entry name" value="Ribosomal_uS7_B"/>
    <property type="match status" value="1"/>
</dbReference>
<dbReference type="InterPro" id="IPR000235">
    <property type="entry name" value="Ribosomal_uS7"/>
</dbReference>
<dbReference type="InterPro" id="IPR005717">
    <property type="entry name" value="Ribosomal_uS7_bac/org-type"/>
</dbReference>
<dbReference type="InterPro" id="IPR020606">
    <property type="entry name" value="Ribosomal_uS7_CS"/>
</dbReference>
<dbReference type="InterPro" id="IPR023798">
    <property type="entry name" value="Ribosomal_uS7_dom"/>
</dbReference>
<dbReference type="InterPro" id="IPR036823">
    <property type="entry name" value="Ribosomal_uS7_dom_sf"/>
</dbReference>
<dbReference type="NCBIfam" id="TIGR01029">
    <property type="entry name" value="rpsG_bact"/>
    <property type="match status" value="1"/>
</dbReference>
<dbReference type="PANTHER" id="PTHR11205">
    <property type="entry name" value="RIBOSOMAL PROTEIN S7"/>
    <property type="match status" value="1"/>
</dbReference>
<dbReference type="Pfam" id="PF00177">
    <property type="entry name" value="Ribosomal_S7"/>
    <property type="match status" value="1"/>
</dbReference>
<dbReference type="PIRSF" id="PIRSF002122">
    <property type="entry name" value="RPS7p_RPS7a_RPS5e_RPS7o"/>
    <property type="match status" value="1"/>
</dbReference>
<dbReference type="SUPFAM" id="SSF47973">
    <property type="entry name" value="Ribosomal protein S7"/>
    <property type="match status" value="1"/>
</dbReference>
<dbReference type="PROSITE" id="PS00052">
    <property type="entry name" value="RIBOSOMAL_S7"/>
    <property type="match status" value="1"/>
</dbReference>
<accession>Q318N3</accession>
<feature type="chain" id="PRO_0000241767" description="Small ribosomal subunit protein uS7">
    <location>
        <begin position="1"/>
        <end position="156"/>
    </location>
</feature>
<organism>
    <name type="scientific">Prochlorococcus marinus (strain MIT 9312)</name>
    <dbReference type="NCBI Taxonomy" id="74546"/>
    <lineage>
        <taxon>Bacteria</taxon>
        <taxon>Bacillati</taxon>
        <taxon>Cyanobacteriota</taxon>
        <taxon>Cyanophyceae</taxon>
        <taxon>Synechococcales</taxon>
        <taxon>Prochlorococcaceae</taxon>
        <taxon>Prochlorococcus</taxon>
    </lineage>
</organism>
<name>RS7_PROM9</name>
<comment type="function">
    <text evidence="1">One of the primary rRNA binding proteins, it binds directly to 16S rRNA where it nucleates assembly of the head domain of the 30S subunit. Is located at the subunit interface close to the decoding center, probably blocks exit of the E-site tRNA.</text>
</comment>
<comment type="subunit">
    <text evidence="1">Part of the 30S ribosomal subunit. Contacts proteins S9 and S11.</text>
</comment>
<comment type="similarity">
    <text evidence="1">Belongs to the universal ribosomal protein uS7 family.</text>
</comment>
<keyword id="KW-0687">Ribonucleoprotein</keyword>
<keyword id="KW-0689">Ribosomal protein</keyword>
<keyword id="KW-0694">RNA-binding</keyword>
<keyword id="KW-0699">rRNA-binding</keyword>
<keyword id="KW-0820">tRNA-binding</keyword>